<organism>
    <name type="scientific">Bacillus subtilis (strain 168)</name>
    <dbReference type="NCBI Taxonomy" id="224308"/>
    <lineage>
        <taxon>Bacteria</taxon>
        <taxon>Bacillati</taxon>
        <taxon>Bacillota</taxon>
        <taxon>Bacilli</taxon>
        <taxon>Bacillales</taxon>
        <taxon>Bacillaceae</taxon>
        <taxon>Bacillus</taxon>
    </lineage>
</organism>
<comment type="similarity">
    <text evidence="1">Belongs to the asp23 family.</text>
</comment>
<gene>
    <name type="primary">yloU</name>
    <name type="ordered locus">BSU15830</name>
</gene>
<feature type="chain" id="PRO_0000170486" description="Uncharacterized protein YloU">
    <location>
        <begin position="1"/>
        <end position="120"/>
    </location>
</feature>
<name>YLOU_BACSU</name>
<keyword id="KW-1185">Reference proteome</keyword>
<accession>O34318</accession>
<reference key="1">
    <citation type="journal article" date="1998" name="Microbiology">
        <title>A 28 kbp segment from the spoVM region of the Bacillus subtilis 168 genome.</title>
        <authorList>
            <person name="Foulger D."/>
            <person name="Errington J."/>
        </authorList>
    </citation>
    <scope>NUCLEOTIDE SEQUENCE [GENOMIC DNA]</scope>
    <source>
        <strain>168</strain>
    </source>
</reference>
<reference key="2">
    <citation type="journal article" date="1997" name="Nature">
        <title>The complete genome sequence of the Gram-positive bacterium Bacillus subtilis.</title>
        <authorList>
            <person name="Kunst F."/>
            <person name="Ogasawara N."/>
            <person name="Moszer I."/>
            <person name="Albertini A.M."/>
            <person name="Alloni G."/>
            <person name="Azevedo V."/>
            <person name="Bertero M.G."/>
            <person name="Bessieres P."/>
            <person name="Bolotin A."/>
            <person name="Borchert S."/>
            <person name="Borriss R."/>
            <person name="Boursier L."/>
            <person name="Brans A."/>
            <person name="Braun M."/>
            <person name="Brignell S.C."/>
            <person name="Bron S."/>
            <person name="Brouillet S."/>
            <person name="Bruschi C.V."/>
            <person name="Caldwell B."/>
            <person name="Capuano V."/>
            <person name="Carter N.M."/>
            <person name="Choi S.-K."/>
            <person name="Codani J.-J."/>
            <person name="Connerton I.F."/>
            <person name="Cummings N.J."/>
            <person name="Daniel R.A."/>
            <person name="Denizot F."/>
            <person name="Devine K.M."/>
            <person name="Duesterhoeft A."/>
            <person name="Ehrlich S.D."/>
            <person name="Emmerson P.T."/>
            <person name="Entian K.-D."/>
            <person name="Errington J."/>
            <person name="Fabret C."/>
            <person name="Ferrari E."/>
            <person name="Foulger D."/>
            <person name="Fritz C."/>
            <person name="Fujita M."/>
            <person name="Fujita Y."/>
            <person name="Fuma S."/>
            <person name="Galizzi A."/>
            <person name="Galleron N."/>
            <person name="Ghim S.-Y."/>
            <person name="Glaser P."/>
            <person name="Goffeau A."/>
            <person name="Golightly E.J."/>
            <person name="Grandi G."/>
            <person name="Guiseppi G."/>
            <person name="Guy B.J."/>
            <person name="Haga K."/>
            <person name="Haiech J."/>
            <person name="Harwood C.R."/>
            <person name="Henaut A."/>
            <person name="Hilbert H."/>
            <person name="Holsappel S."/>
            <person name="Hosono S."/>
            <person name="Hullo M.-F."/>
            <person name="Itaya M."/>
            <person name="Jones L.-M."/>
            <person name="Joris B."/>
            <person name="Karamata D."/>
            <person name="Kasahara Y."/>
            <person name="Klaerr-Blanchard M."/>
            <person name="Klein C."/>
            <person name="Kobayashi Y."/>
            <person name="Koetter P."/>
            <person name="Koningstein G."/>
            <person name="Krogh S."/>
            <person name="Kumano M."/>
            <person name="Kurita K."/>
            <person name="Lapidus A."/>
            <person name="Lardinois S."/>
            <person name="Lauber J."/>
            <person name="Lazarevic V."/>
            <person name="Lee S.-M."/>
            <person name="Levine A."/>
            <person name="Liu H."/>
            <person name="Masuda S."/>
            <person name="Mauel C."/>
            <person name="Medigue C."/>
            <person name="Medina N."/>
            <person name="Mellado R.P."/>
            <person name="Mizuno M."/>
            <person name="Moestl D."/>
            <person name="Nakai S."/>
            <person name="Noback M."/>
            <person name="Noone D."/>
            <person name="O'Reilly M."/>
            <person name="Ogawa K."/>
            <person name="Ogiwara A."/>
            <person name="Oudega B."/>
            <person name="Park S.-H."/>
            <person name="Parro V."/>
            <person name="Pohl T.M."/>
            <person name="Portetelle D."/>
            <person name="Porwollik S."/>
            <person name="Prescott A.M."/>
            <person name="Presecan E."/>
            <person name="Pujic P."/>
            <person name="Purnelle B."/>
            <person name="Rapoport G."/>
            <person name="Rey M."/>
            <person name="Reynolds S."/>
            <person name="Rieger M."/>
            <person name="Rivolta C."/>
            <person name="Rocha E."/>
            <person name="Roche B."/>
            <person name="Rose M."/>
            <person name="Sadaie Y."/>
            <person name="Sato T."/>
            <person name="Scanlan E."/>
            <person name="Schleich S."/>
            <person name="Schroeter R."/>
            <person name="Scoffone F."/>
            <person name="Sekiguchi J."/>
            <person name="Sekowska A."/>
            <person name="Seror S.J."/>
            <person name="Serror P."/>
            <person name="Shin B.-S."/>
            <person name="Soldo B."/>
            <person name="Sorokin A."/>
            <person name="Tacconi E."/>
            <person name="Takagi T."/>
            <person name="Takahashi H."/>
            <person name="Takemaru K."/>
            <person name="Takeuchi M."/>
            <person name="Tamakoshi A."/>
            <person name="Tanaka T."/>
            <person name="Terpstra P."/>
            <person name="Tognoni A."/>
            <person name="Tosato V."/>
            <person name="Uchiyama S."/>
            <person name="Vandenbol M."/>
            <person name="Vannier F."/>
            <person name="Vassarotti A."/>
            <person name="Viari A."/>
            <person name="Wambutt R."/>
            <person name="Wedler E."/>
            <person name="Wedler H."/>
            <person name="Weitzenegger T."/>
            <person name="Winters P."/>
            <person name="Wipat A."/>
            <person name="Yamamoto H."/>
            <person name="Yamane K."/>
            <person name="Yasumoto K."/>
            <person name="Yata K."/>
            <person name="Yoshida K."/>
            <person name="Yoshikawa H.-F."/>
            <person name="Zumstein E."/>
            <person name="Yoshikawa H."/>
            <person name="Danchin A."/>
        </authorList>
    </citation>
    <scope>NUCLEOTIDE SEQUENCE [LARGE SCALE GENOMIC DNA]</scope>
    <source>
        <strain>168</strain>
    </source>
</reference>
<proteinExistence type="inferred from homology"/>
<protein>
    <recommendedName>
        <fullName>Uncharacterized protein YloU</fullName>
    </recommendedName>
</protein>
<evidence type="ECO:0000305" key="1"/>
<sequence>MSIELRTKYGQIDISNEVIAMVAGGAAVDCYGIVGMASKNQIKDGLTEILRKENFSRGVQVRQEGEQIHIDMYIIVSYGTKISEVAHNVQTKVKYTVNQTIGLAVDSVNIYVQGVRVTNP</sequence>
<dbReference type="EMBL" id="Y13937">
    <property type="protein sequence ID" value="CAA74256.1"/>
    <property type="molecule type" value="Genomic_DNA"/>
</dbReference>
<dbReference type="EMBL" id="AL009126">
    <property type="protein sequence ID" value="CAB13456.1"/>
    <property type="molecule type" value="Genomic_DNA"/>
</dbReference>
<dbReference type="PIR" id="D69879">
    <property type="entry name" value="D69879"/>
</dbReference>
<dbReference type="RefSeq" id="NP_389465.1">
    <property type="nucleotide sequence ID" value="NC_000964.3"/>
</dbReference>
<dbReference type="RefSeq" id="WP_003232054.1">
    <property type="nucleotide sequence ID" value="NZ_OZ025638.1"/>
</dbReference>
<dbReference type="SMR" id="O34318"/>
<dbReference type="FunCoup" id="O34318">
    <property type="interactions" value="12"/>
</dbReference>
<dbReference type="STRING" id="224308.BSU15830"/>
<dbReference type="jPOST" id="O34318"/>
<dbReference type="PaxDb" id="224308-BSU15830"/>
<dbReference type="DNASU" id="937855"/>
<dbReference type="EnsemblBacteria" id="CAB13456">
    <property type="protein sequence ID" value="CAB13456"/>
    <property type="gene ID" value="BSU_15830"/>
</dbReference>
<dbReference type="GeneID" id="937855"/>
<dbReference type="KEGG" id="bsu:BSU15830"/>
<dbReference type="PATRIC" id="fig|224308.179.peg.1723"/>
<dbReference type="eggNOG" id="COG1302">
    <property type="taxonomic scope" value="Bacteria"/>
</dbReference>
<dbReference type="InParanoid" id="O34318"/>
<dbReference type="OrthoDB" id="9791482at2"/>
<dbReference type="PhylomeDB" id="O34318"/>
<dbReference type="BioCyc" id="BSUB:BSU15830-MONOMER"/>
<dbReference type="Proteomes" id="UP000001570">
    <property type="component" value="Chromosome"/>
</dbReference>
<dbReference type="InterPro" id="IPR005531">
    <property type="entry name" value="Asp23"/>
</dbReference>
<dbReference type="PANTHER" id="PTHR34297:SF2">
    <property type="entry name" value="ASP23_GLS24 FAMILY ENVELOPE STRESS RESPONSE PROTEIN"/>
    <property type="match status" value="1"/>
</dbReference>
<dbReference type="PANTHER" id="PTHR34297">
    <property type="entry name" value="HYPOTHETICAL CYTOSOLIC PROTEIN-RELATED"/>
    <property type="match status" value="1"/>
</dbReference>
<dbReference type="Pfam" id="PF03780">
    <property type="entry name" value="Asp23"/>
    <property type="match status" value="1"/>
</dbReference>